<evidence type="ECO:0000269" key="1">
    <source>
    </source>
</evidence>
<evidence type="ECO:0000269" key="2">
    <source>
    </source>
</evidence>
<evidence type="ECO:0000269" key="3">
    <source>
    </source>
</evidence>
<evidence type="ECO:0000269" key="4">
    <source>
    </source>
</evidence>
<evidence type="ECO:0000269" key="5">
    <source>
    </source>
</evidence>
<evidence type="ECO:0000269" key="6">
    <source>
    </source>
</evidence>
<evidence type="ECO:0000269" key="7">
    <source>
    </source>
</evidence>
<evidence type="ECO:0000269" key="8">
    <source>
    </source>
</evidence>
<evidence type="ECO:0000303" key="9">
    <source>
    </source>
</evidence>
<evidence type="ECO:0000303" key="10">
    <source>
    </source>
</evidence>
<evidence type="ECO:0000305" key="11"/>
<evidence type="ECO:0000305" key="12">
    <source>
    </source>
</evidence>
<evidence type="ECO:0007829" key="13">
    <source>
        <dbReference type="PDB" id="2JQ3"/>
    </source>
</evidence>
<sequence length="99" mass="10852">MQPRVLLVVALLALLASARASEAEDASLLSFMQGYMKHATKTAKDALSSVQESQVAQQARGWVTDGFSSLKDYWSTVKDKFSEFWDLDPEVRPTSAVAA</sequence>
<dbReference type="EMBL" id="J00098">
    <property type="protein sequence ID" value="AAB59515.1"/>
    <property type="molecule type" value="Genomic_DNA"/>
</dbReference>
<dbReference type="EMBL" id="M33043">
    <property type="protein sequence ID" value="AAB59372.1"/>
    <property type="molecule type" value="Genomic_DNA"/>
</dbReference>
<dbReference type="EMBL" id="M33041">
    <property type="protein sequence ID" value="AAB59372.1"/>
    <property type="status" value="JOINED"/>
    <property type="molecule type" value="Genomic_DNA"/>
</dbReference>
<dbReference type="EMBL" id="M33042">
    <property type="protein sequence ID" value="AAB59372.1"/>
    <property type="status" value="JOINED"/>
    <property type="molecule type" value="Genomic_DNA"/>
</dbReference>
<dbReference type="EMBL" id="X01392">
    <property type="protein sequence ID" value="CAA25648.1"/>
    <property type="molecule type" value="Genomic_DNA"/>
</dbReference>
<dbReference type="EMBL" id="X01388">
    <property type="protein sequence ID" value="CAA25644.1"/>
    <property type="molecule type" value="mRNA"/>
</dbReference>
<dbReference type="EMBL" id="X03120">
    <property type="protein sequence ID" value="CAA26895.1"/>
    <property type="molecule type" value="Genomic_DNA"/>
</dbReference>
<dbReference type="EMBL" id="V01513">
    <property type="protein sequence ID" value="CAA24757.1"/>
    <property type="molecule type" value="mRNA"/>
</dbReference>
<dbReference type="EMBL" id="M28613">
    <property type="protein sequence ID" value="AAA51760.1"/>
    <property type="molecule type" value="mRNA"/>
</dbReference>
<dbReference type="EMBL" id="M28614">
    <property type="protein sequence ID" value="AAA51761.1"/>
    <property type="molecule type" value="mRNA"/>
</dbReference>
<dbReference type="EMBL" id="X00567">
    <property type="protein sequence ID" value="CAA25233.1"/>
    <property type="molecule type" value="mRNA"/>
</dbReference>
<dbReference type="EMBL" id="AY422951">
    <property type="protein sequence ID" value="AAQ91810.1"/>
    <property type="molecule type" value="Genomic_DNA"/>
</dbReference>
<dbReference type="EMBL" id="AY555191">
    <property type="protein sequence ID" value="AAS68230.1"/>
    <property type="molecule type" value="Genomic_DNA"/>
</dbReference>
<dbReference type="EMBL" id="BC027977">
    <property type="protein sequence ID" value="AAH27977.1"/>
    <property type="molecule type" value="mRNA"/>
</dbReference>
<dbReference type="EMBL" id="BC121081">
    <property type="protein sequence ID" value="AAI21082.1"/>
    <property type="molecule type" value="mRNA"/>
</dbReference>
<dbReference type="CCDS" id="CCDS8377.1"/>
<dbReference type="PIR" id="A90950">
    <property type="entry name" value="LPHUC3"/>
</dbReference>
<dbReference type="RefSeq" id="NP_000031.1">
    <property type="nucleotide sequence ID" value="NM_000040.3"/>
</dbReference>
<dbReference type="PDB" id="2JQ3">
    <property type="method" value="NMR"/>
    <property type="chains" value="A=21-99"/>
</dbReference>
<dbReference type="PDBsum" id="2JQ3"/>
<dbReference type="BMRB" id="P02656"/>
<dbReference type="SMR" id="P02656"/>
<dbReference type="BioGRID" id="106842">
    <property type="interactions" value="45"/>
</dbReference>
<dbReference type="FunCoup" id="P02656">
    <property type="interactions" value="112"/>
</dbReference>
<dbReference type="IntAct" id="P02656">
    <property type="interactions" value="30"/>
</dbReference>
<dbReference type="MINT" id="P02656"/>
<dbReference type="STRING" id="9606.ENSP00000227667"/>
<dbReference type="ChEMBL" id="CHEMBL4523160"/>
<dbReference type="DrugBank" id="DB09130">
    <property type="generic name" value="Copper"/>
</dbReference>
<dbReference type="DrugBank" id="DB11886">
    <property type="generic name" value="Infigratinib"/>
</dbReference>
<dbReference type="DrugBank" id="DB00877">
    <property type="generic name" value="Sirolimus"/>
</dbReference>
<dbReference type="DrugBank" id="DB00460">
    <property type="generic name" value="Verteporfin"/>
</dbReference>
<dbReference type="DrugBank" id="DB15067">
    <property type="generic name" value="Volanesorsen"/>
</dbReference>
<dbReference type="DrugCentral" id="P02656"/>
<dbReference type="CarbonylDB" id="P02656"/>
<dbReference type="GlyConnect" id="58">
    <property type="glycosylation" value="4 O-Linked glycans (1 site)"/>
</dbReference>
<dbReference type="GlyCosmos" id="P02656">
    <property type="glycosylation" value="1 site, 8 glycans"/>
</dbReference>
<dbReference type="GlyGen" id="P02656">
    <property type="glycosylation" value="2 sites, 10 O-linked glycans (2 sites)"/>
</dbReference>
<dbReference type="iPTMnet" id="P02656"/>
<dbReference type="PhosphoSitePlus" id="P02656"/>
<dbReference type="BioMuta" id="APOC3"/>
<dbReference type="DMDM" id="114026"/>
<dbReference type="CPTAC" id="non-CPTAC-1083"/>
<dbReference type="jPOST" id="P02656"/>
<dbReference type="MassIVE" id="P02656"/>
<dbReference type="PaxDb" id="9606-ENSP00000227667"/>
<dbReference type="PeptideAtlas" id="P02656"/>
<dbReference type="ProteomicsDB" id="51541"/>
<dbReference type="ABCD" id="P02656">
    <property type="antibodies" value="24 sequenced antibodies"/>
</dbReference>
<dbReference type="Antibodypedia" id="32278">
    <property type="antibodies" value="411 antibodies from 36 providers"/>
</dbReference>
<dbReference type="DNASU" id="345"/>
<dbReference type="Ensembl" id="ENST00000227667.8">
    <property type="protein sequence ID" value="ENSP00000227667.2"/>
    <property type="gene ID" value="ENSG00000110245.12"/>
</dbReference>
<dbReference type="GeneID" id="345"/>
<dbReference type="KEGG" id="hsa:345"/>
<dbReference type="MANE-Select" id="ENST00000227667.8">
    <property type="protein sequence ID" value="ENSP00000227667.2"/>
    <property type="RefSeq nucleotide sequence ID" value="NM_000040.3"/>
    <property type="RefSeq protein sequence ID" value="NP_000031.1"/>
</dbReference>
<dbReference type="UCSC" id="uc001ppt.2">
    <property type="organism name" value="human"/>
</dbReference>
<dbReference type="AGR" id="HGNC:610"/>
<dbReference type="CTD" id="345"/>
<dbReference type="DisGeNET" id="345"/>
<dbReference type="GeneCards" id="APOC3"/>
<dbReference type="HGNC" id="HGNC:610">
    <property type="gene designation" value="APOC3"/>
</dbReference>
<dbReference type="HPA" id="ENSG00000110245">
    <property type="expression patterns" value="Tissue enriched (liver)"/>
</dbReference>
<dbReference type="MalaCards" id="APOC3"/>
<dbReference type="MIM" id="107720">
    <property type="type" value="gene"/>
</dbReference>
<dbReference type="MIM" id="614028">
    <property type="type" value="phenotype"/>
</dbReference>
<dbReference type="neXtProt" id="NX_P02656"/>
<dbReference type="OpenTargets" id="ENSG00000110245"/>
<dbReference type="Orphanet" id="181428">
    <property type="disease" value="Familial Hyperalphalipoproteinemia"/>
</dbReference>
<dbReference type="PharmGKB" id="PA53"/>
<dbReference type="VEuPathDB" id="HostDB:ENSG00000110245"/>
<dbReference type="eggNOG" id="ENOG502SZ00">
    <property type="taxonomic scope" value="Eukaryota"/>
</dbReference>
<dbReference type="GeneTree" id="ENSGT00390000015395"/>
<dbReference type="HOGENOM" id="CLU_154694_0_0_1"/>
<dbReference type="InParanoid" id="P02656"/>
<dbReference type="OMA" id="YWSTFKG"/>
<dbReference type="OrthoDB" id="9049572at2759"/>
<dbReference type="PAN-GO" id="P02656">
    <property type="GO annotations" value="14 GO annotations based on evolutionary models"/>
</dbReference>
<dbReference type="PhylomeDB" id="P02656"/>
<dbReference type="TreeFam" id="TF338209"/>
<dbReference type="PathwayCommons" id="P02656"/>
<dbReference type="Reactome" id="R-HSA-8963888">
    <property type="pathway name" value="Chylomicron assembly"/>
</dbReference>
<dbReference type="Reactome" id="R-HSA-8963901">
    <property type="pathway name" value="Chylomicron remodeling"/>
</dbReference>
<dbReference type="Reactome" id="R-HSA-8964058">
    <property type="pathway name" value="HDL remodeling"/>
</dbReference>
<dbReference type="Reactome" id="R-HSA-975634">
    <property type="pathway name" value="Retinoid metabolism and transport"/>
</dbReference>
<dbReference type="SignaLink" id="P02656"/>
<dbReference type="SIGNOR" id="P02656"/>
<dbReference type="BioGRID-ORCS" id="345">
    <property type="hits" value="10 hits in 1146 CRISPR screens"/>
</dbReference>
<dbReference type="ChiTaRS" id="APOC3">
    <property type="organism name" value="human"/>
</dbReference>
<dbReference type="EvolutionaryTrace" id="P02656"/>
<dbReference type="GeneWiki" id="Apolipoprotein_C3"/>
<dbReference type="GenomeRNAi" id="345"/>
<dbReference type="Pharos" id="P02656">
    <property type="development level" value="Tclin"/>
</dbReference>
<dbReference type="PRO" id="PR:P02656"/>
<dbReference type="Proteomes" id="UP000005640">
    <property type="component" value="Chromosome 11"/>
</dbReference>
<dbReference type="RNAct" id="P02656">
    <property type="molecule type" value="protein"/>
</dbReference>
<dbReference type="Bgee" id="ENSG00000110245">
    <property type="expression patterns" value="Expressed in jejunal mucosa and 106 other cell types or tissues"/>
</dbReference>
<dbReference type="ExpressionAtlas" id="P02656">
    <property type="expression patterns" value="baseline and differential"/>
</dbReference>
<dbReference type="GO" id="GO:0042627">
    <property type="term" value="C:chylomicron"/>
    <property type="evidence" value="ECO:0000314"/>
    <property type="project" value="BHF-UCL"/>
</dbReference>
<dbReference type="GO" id="GO:0062023">
    <property type="term" value="C:collagen-containing extracellular matrix"/>
    <property type="evidence" value="ECO:0007005"/>
    <property type="project" value="BHF-UCL"/>
</dbReference>
<dbReference type="GO" id="GO:0005769">
    <property type="term" value="C:early endosome"/>
    <property type="evidence" value="ECO:0000304"/>
    <property type="project" value="Reactome"/>
</dbReference>
<dbReference type="GO" id="GO:0070062">
    <property type="term" value="C:extracellular exosome"/>
    <property type="evidence" value="ECO:0007005"/>
    <property type="project" value="UniProtKB"/>
</dbReference>
<dbReference type="GO" id="GO:0005576">
    <property type="term" value="C:extracellular region"/>
    <property type="evidence" value="ECO:0000304"/>
    <property type="project" value="Reactome"/>
</dbReference>
<dbReference type="GO" id="GO:0005615">
    <property type="term" value="C:extracellular space"/>
    <property type="evidence" value="ECO:0000314"/>
    <property type="project" value="BHF-UCL"/>
</dbReference>
<dbReference type="GO" id="GO:0034363">
    <property type="term" value="C:intermediate-density lipoprotein particle"/>
    <property type="evidence" value="ECO:0000314"/>
    <property type="project" value="BHF-UCL"/>
</dbReference>
<dbReference type="GO" id="GO:0034366">
    <property type="term" value="C:spherical high-density lipoprotein particle"/>
    <property type="evidence" value="ECO:0000314"/>
    <property type="project" value="BHF-UCL"/>
</dbReference>
<dbReference type="GO" id="GO:0034361">
    <property type="term" value="C:very-low-density lipoprotein particle"/>
    <property type="evidence" value="ECO:0000314"/>
    <property type="project" value="BHF-UCL"/>
</dbReference>
<dbReference type="GO" id="GO:0015485">
    <property type="term" value="F:cholesterol binding"/>
    <property type="evidence" value="ECO:0000305"/>
    <property type="project" value="BHF-UCL"/>
</dbReference>
<dbReference type="GO" id="GO:0070653">
    <property type="term" value="F:high-density lipoprotein particle receptor binding"/>
    <property type="evidence" value="ECO:0000353"/>
    <property type="project" value="BHF-UCL"/>
</dbReference>
<dbReference type="GO" id="GO:0055102">
    <property type="term" value="F:lipase inhibitor activity"/>
    <property type="evidence" value="ECO:0000314"/>
    <property type="project" value="BHF-UCL"/>
</dbReference>
<dbReference type="GO" id="GO:0005543">
    <property type="term" value="F:phospholipid binding"/>
    <property type="evidence" value="ECO:0000314"/>
    <property type="project" value="BHF-UCL"/>
</dbReference>
<dbReference type="GO" id="GO:0033344">
    <property type="term" value="P:cholesterol efflux"/>
    <property type="evidence" value="ECO:0000314"/>
    <property type="project" value="BHF-UCL"/>
</dbReference>
<dbReference type="GO" id="GO:0042632">
    <property type="term" value="P:cholesterol homeostasis"/>
    <property type="evidence" value="ECO:0000315"/>
    <property type="project" value="BHF-UCL"/>
</dbReference>
<dbReference type="GO" id="GO:0034382">
    <property type="term" value="P:chylomicron remnant clearance"/>
    <property type="evidence" value="ECO:0000314"/>
    <property type="project" value="BHF-UCL"/>
</dbReference>
<dbReference type="GO" id="GO:0007186">
    <property type="term" value="P:G protein-coupled receptor signaling pathway"/>
    <property type="evidence" value="ECO:0000314"/>
    <property type="project" value="BHF-UCL"/>
</dbReference>
<dbReference type="GO" id="GO:0034375">
    <property type="term" value="P:high-density lipoprotein particle remodeling"/>
    <property type="evidence" value="ECO:0000315"/>
    <property type="project" value="BHF-UCL"/>
</dbReference>
<dbReference type="GO" id="GO:0042157">
    <property type="term" value="P:lipoprotein metabolic process"/>
    <property type="evidence" value="ECO:0007669"/>
    <property type="project" value="InterPro"/>
</dbReference>
<dbReference type="GO" id="GO:0060621">
    <property type="term" value="P:negative regulation of cholesterol import"/>
    <property type="evidence" value="ECO:0000315"/>
    <property type="project" value="BHF-UCL"/>
</dbReference>
<dbReference type="GO" id="GO:0045717">
    <property type="term" value="P:negative regulation of fatty acid biosynthetic process"/>
    <property type="evidence" value="ECO:0000314"/>
    <property type="project" value="BHF-UCL"/>
</dbReference>
<dbReference type="GO" id="GO:0010987">
    <property type="term" value="P:negative regulation of high-density lipoprotein particle clearance"/>
    <property type="evidence" value="ECO:0000315"/>
    <property type="project" value="BHF-UCL"/>
</dbReference>
<dbReference type="GO" id="GO:0050995">
    <property type="term" value="P:negative regulation of lipid catabolic process"/>
    <property type="evidence" value="ECO:0000314"/>
    <property type="project" value="BHF-UCL"/>
</dbReference>
<dbReference type="GO" id="GO:0045833">
    <property type="term" value="P:negative regulation of lipid metabolic process"/>
    <property type="evidence" value="ECO:0000314"/>
    <property type="project" value="BHF-UCL"/>
</dbReference>
<dbReference type="GO" id="GO:0010989">
    <property type="term" value="P:negative regulation of low-density lipoprotein particle clearance"/>
    <property type="evidence" value="ECO:0000315"/>
    <property type="project" value="BHF-UCL"/>
</dbReference>
<dbReference type="GO" id="GO:0048261">
    <property type="term" value="P:negative regulation of receptor-mediated endocytosis"/>
    <property type="evidence" value="ECO:0000314"/>
    <property type="project" value="BHF-UCL"/>
</dbReference>
<dbReference type="GO" id="GO:0010897">
    <property type="term" value="P:negative regulation of triglyceride catabolic process"/>
    <property type="evidence" value="ECO:0000314"/>
    <property type="project" value="BHF-UCL"/>
</dbReference>
<dbReference type="GO" id="GO:0010916">
    <property type="term" value="P:negative regulation of very-low-density lipoprotein particle clearance"/>
    <property type="evidence" value="ECO:0000314"/>
    <property type="project" value="BHF-UCL"/>
</dbReference>
<dbReference type="GO" id="GO:0010903">
    <property type="term" value="P:negative regulation of very-low-density lipoprotein particle remodeling"/>
    <property type="evidence" value="ECO:0000314"/>
    <property type="project" value="BHF-UCL"/>
</dbReference>
<dbReference type="GO" id="GO:0033700">
    <property type="term" value="P:phospholipid efflux"/>
    <property type="evidence" value="ECO:0000314"/>
    <property type="project" value="BHF-UCL"/>
</dbReference>
<dbReference type="GO" id="GO:0032489">
    <property type="term" value="P:regulation of Cdc42 protein signal transduction"/>
    <property type="evidence" value="ECO:0000314"/>
    <property type="project" value="BHF-UCL"/>
</dbReference>
<dbReference type="GO" id="GO:0043691">
    <property type="term" value="P:reverse cholesterol transport"/>
    <property type="evidence" value="ECO:0000305"/>
    <property type="project" value="BHF-UCL"/>
</dbReference>
<dbReference type="GO" id="GO:0019433">
    <property type="term" value="P:triglyceride catabolic process"/>
    <property type="evidence" value="ECO:0000314"/>
    <property type="project" value="BHF-UCL"/>
</dbReference>
<dbReference type="GO" id="GO:0070328">
    <property type="term" value="P:triglyceride homeostasis"/>
    <property type="evidence" value="ECO:0000315"/>
    <property type="project" value="BHF-UCL"/>
</dbReference>
<dbReference type="GO" id="GO:0006641">
    <property type="term" value="P:triglyceride metabolic process"/>
    <property type="evidence" value="ECO:0000315"/>
    <property type="project" value="HGNC-UCL"/>
</dbReference>
<dbReference type="GO" id="GO:0034379">
    <property type="term" value="P:very-low-density lipoprotein particle assembly"/>
    <property type="evidence" value="ECO:0000304"/>
    <property type="project" value="BHF-UCL"/>
</dbReference>
<dbReference type="Gene3D" id="6.10.90.10">
    <property type="entry name" value="Apolipoprotein CIII"/>
    <property type="match status" value="1"/>
</dbReference>
<dbReference type="InterPro" id="IPR008403">
    <property type="entry name" value="Apo-CIII"/>
</dbReference>
<dbReference type="InterPro" id="IPR038195">
    <property type="entry name" value="Apo_CIII_sf"/>
</dbReference>
<dbReference type="PANTHER" id="PTHR14225">
    <property type="entry name" value="APOLIPOPROTEIN C-III"/>
    <property type="match status" value="1"/>
</dbReference>
<dbReference type="PANTHER" id="PTHR14225:SF0">
    <property type="entry name" value="APOLIPOPROTEIN C-III"/>
    <property type="match status" value="1"/>
</dbReference>
<dbReference type="Pfam" id="PF05778">
    <property type="entry name" value="Apo-CIII"/>
    <property type="match status" value="1"/>
</dbReference>
<protein>
    <recommendedName>
        <fullName>Apolipoprotein C-III</fullName>
        <shortName>Apo-CIII</shortName>
        <shortName>ApoC-III</shortName>
    </recommendedName>
    <alternativeName>
        <fullName>Apolipoprotein C3</fullName>
    </alternativeName>
</protein>
<reference key="1">
    <citation type="journal article" date="1984" name="DNA">
        <title>Isolation and sequence analysis of the human apolipoprotein CIII gene and the intergenic region between the apo AI and apo CIII genes.</title>
        <authorList>
            <person name="Protter A.A."/>
            <person name="Levy-Wilson B."/>
            <person name="Miller J."/>
            <person name="Bencen G."/>
            <person name="White T."/>
            <person name="Seilhamer J.J."/>
        </authorList>
    </citation>
    <scope>NUCLEOTIDE SEQUENCE [GENOMIC DNA / MRNA]</scope>
</reference>
<reference key="2">
    <citation type="journal article" date="1984" name="DNA">
        <title>Isolation and DNA sequence of full-length cDNA for human preapolipoprotein CIII.</title>
        <authorList>
            <person name="Levy-Wilson B."/>
            <person name="Appleby V."/>
            <person name="Protter A.A."/>
            <person name="Auperin D."/>
            <person name="Seilhamer J.J."/>
        </authorList>
    </citation>
    <scope>NUCLEOTIDE SEQUENCE [MRNA]</scope>
</reference>
<reference key="3">
    <citation type="journal article" date="1985" name="J. Lipid Res.">
        <title>Isolation and characterization of cDNA clones corresponding to two different human apoC-III alleles.</title>
        <authorList>
            <person name="Karathanasis S.K."/>
            <person name="Zannis V.I."/>
            <person name="Breslow J.L."/>
        </authorList>
    </citation>
    <scope>NUCLEOTIDE SEQUENCE [GENOMIC DNA / MRNA]</scope>
</reference>
<reference key="4">
    <citation type="journal article" date="1984" name="Nucleic Acids Res.">
        <title>Human apolipoproteins AI, AII, CII and CIII. cDNA sequences and mRNA abundance.</title>
        <authorList>
            <person name="Sharpe C.R."/>
            <person name="Sidoli A."/>
            <person name="Shelley C.S."/>
            <person name="Lucero M.A."/>
            <person name="Shoulders C.C."/>
            <person name="Baralle F.E."/>
        </authorList>
    </citation>
    <scope>NUCLEOTIDE SEQUENCE [GENOMIC DNA]</scope>
    <scope>TISSUE SPECIFICITY</scope>
</reference>
<reference key="5">
    <citation type="journal article" date="2004" name="Hum. Genet.">
        <title>The effects of scale: variation in the APOA1/C3/A4/A5 gene cluster.</title>
        <authorList>
            <person name="Fullerton S.M."/>
            <person name="Buchanan A.V."/>
            <person name="Sonpar V.A."/>
            <person name="Taylor S.L."/>
            <person name="Smith J.D."/>
            <person name="Carlson C.S."/>
            <person name="Salomaa V."/>
            <person name="Stengaard J.H."/>
            <person name="Boerwinkle E."/>
            <person name="Clark A.G."/>
            <person name="Nickerson D.A."/>
            <person name="Weiss K.M."/>
        </authorList>
    </citation>
    <scope>NUCLEOTIDE SEQUENCE [GENOMIC DNA]</scope>
</reference>
<reference key="6">
    <citation type="journal article" date="2004" name="Genome Res.">
        <title>The status, quality, and expansion of the NIH full-length cDNA project: the Mammalian Gene Collection (MGC).</title>
        <authorList>
            <consortium name="The MGC Project Team"/>
        </authorList>
    </citation>
    <scope>NUCLEOTIDE SEQUENCE [LARGE SCALE MRNA]</scope>
    <source>
        <tissue>Pancreas</tissue>
        <tissue>Spleen</tissue>
    </source>
</reference>
<reference key="7">
    <citation type="journal article" date="1986" name="FEBS Lett.">
        <title>Amino acid sequence of human plasma apolipoprotein C-III from normolipidemic subjects.</title>
        <authorList>
            <person name="Hospattankar A.V."/>
            <person name="Brewer H.B. Jr."/>
            <person name="Ronan R."/>
            <person name="Fairwell T."/>
        </authorList>
    </citation>
    <scope>PROTEIN SEQUENCE OF 21-99</scope>
</reference>
<reference key="8">
    <citation type="journal article" date="1974" name="J. Biol. Chem.">
        <title>The complete amino acid sequence of alanine apolipoprotein (apoC-3), and apolipoprotein from human plasma very low density lipoproteins.</title>
        <authorList>
            <person name="Brewer H.B. Jr."/>
            <person name="Shulman R."/>
            <person name="Herbert P."/>
            <person name="Ronan R."/>
            <person name="Wehrly K."/>
        </authorList>
    </citation>
    <scope>PROTEIN SEQUENCE OF 21-99</scope>
</reference>
<reference key="9">
    <citation type="journal article" date="2008" name="Int. J. Clin. Pract.">
        <title>An ABC of apolipoprotein C-III: a clinically useful new cardiovascular risk factor?</title>
        <authorList>
            <person name="Chan D.C."/>
            <person name="Chen M.M."/>
            <person name="Ooi E.M."/>
            <person name="Watts G.F."/>
        </authorList>
    </citation>
    <scope>REVIEW</scope>
</reference>
<reference key="10">
    <citation type="journal article" date="2009" name="Nat. Methods">
        <title>Enrichment of glycopeptides for glycan structure and attachment site identification.</title>
        <authorList>
            <person name="Nilsson J."/>
            <person name="Rueetschi U."/>
            <person name="Halim A."/>
            <person name="Hesse C."/>
            <person name="Carlsohn E."/>
            <person name="Brinkmalm G."/>
            <person name="Larson G."/>
        </authorList>
    </citation>
    <scope>GLYCOSYLATION [LARGE SCALE ANALYSIS] AT THR-94</scope>
    <scope>STRUCTURE OF CARBOHYDRATES</scope>
    <source>
        <tissue>Cerebrospinal fluid</tissue>
    </source>
</reference>
<reference key="11">
    <citation type="journal article" date="2011" name="BMC Syst. Biol.">
        <title>Initial characterization of the human central proteome.</title>
        <authorList>
            <person name="Burkard T.R."/>
            <person name="Planyavsky M."/>
            <person name="Kaupe I."/>
            <person name="Breitwieser F.P."/>
            <person name="Buerckstuemmer T."/>
            <person name="Bennett K.L."/>
            <person name="Superti-Furga G."/>
            <person name="Colinge J."/>
        </authorList>
    </citation>
    <scope>IDENTIFICATION BY MASS SPECTROMETRY [LARGE SCALE ANALYSIS]</scope>
</reference>
<reference key="12">
    <citation type="journal article" date="2012" name="Curr. Opin. Lipidol.">
        <title>Apolipoprotein C-III and hepatic triglyceride-rich lipoprotein production.</title>
        <authorList>
            <person name="Yao Z."/>
            <person name="Wang Y."/>
        </authorList>
    </citation>
    <scope>REVIEW</scope>
</reference>
<reference key="13">
    <citation type="journal article" date="2013" name="J. Proteome Res.">
        <title>Identification of new apolipoprotein-CIII glycoforms with ultrahigh resolution MALDI-FTICR mass spectrometry of human sera.</title>
        <authorList>
            <person name="Nicolardi S."/>
            <person name="van der Burgt Y.E."/>
            <person name="Dragan I."/>
            <person name="Hensbergen P.J."/>
            <person name="Deelder A.M."/>
        </authorList>
    </citation>
    <scope>GLYCOSYLATION AT THR-94</scope>
    <scope>STRUCTURE OF CARBOHYDRATES</scope>
    <scope>IDENTIFICATION BY MASS SPECTROMETRY</scope>
</reference>
<reference key="14">
    <citation type="journal article" date="2014" name="J. Proteomics">
        <title>An enzyme assisted RP-RPLC approach for in-depth analysis of human liver phosphoproteome.</title>
        <authorList>
            <person name="Bian Y."/>
            <person name="Song C."/>
            <person name="Cheng K."/>
            <person name="Dong M."/>
            <person name="Wang F."/>
            <person name="Huang J."/>
            <person name="Sun D."/>
            <person name="Wang L."/>
            <person name="Ye M."/>
            <person name="Zou H."/>
        </authorList>
    </citation>
    <scope>IDENTIFICATION BY MASS SPECTROMETRY [LARGE SCALE ANALYSIS]</scope>
    <source>
        <tissue>Liver</tissue>
    </source>
</reference>
<reference key="15">
    <citation type="journal article" date="2008" name="J. Biol. Chem.">
        <title>Structure and dynamics of human apolipoprotein CIII.</title>
        <authorList>
            <person name="Gangabadage C.S."/>
            <person name="Zdunek J."/>
            <person name="Tessari M."/>
            <person name="Nilsson S."/>
            <person name="Olivecrona G."/>
            <person name="Wijmenga S.S."/>
        </authorList>
    </citation>
    <scope>STRUCTURE BY NMR IN COMPLEX WITH SDS MICELLES</scope>
    <scope>FUNCTION</scope>
</reference>
<reference key="16">
    <citation type="journal article" date="1987" name="J. Lipid Res.">
        <title>Molecular cloning of a human apoC-III variant: Thr 74--&gt;Ala 74 mutation prevents O-glycosylation.</title>
        <authorList>
            <person name="Maeda H."/>
            <person name="Hashimoto R.K."/>
            <person name="Oguro T."/>
            <person name="Hiraga S."/>
            <person name="Uzawa H."/>
        </authorList>
    </citation>
    <scope>VARIANT C-III-0 ALA-94</scope>
    <scope>GLYCOSYLATION AT THR-94</scope>
</reference>
<reference key="17">
    <citation type="journal article" date="1991" name="J. Clin. Invest.">
        <title>Apolipoprotein C-III(Lys-58--&gt;Glu). Identification of an apolipoprotein C-III variant in a family with hyperalphalipoproteinemia.</title>
        <authorList>
            <person name="von Eckardstein A."/>
            <person name="Holz H."/>
            <person name="Sandkamp M."/>
            <person name="Weng W."/>
            <person name="Funke H."/>
            <person name="Assmann G."/>
        </authorList>
    </citation>
    <scope>VARIANT HALP2 GLU-78</scope>
</reference>
<organism>
    <name type="scientific">Homo sapiens</name>
    <name type="common">Human</name>
    <dbReference type="NCBI Taxonomy" id="9606"/>
    <lineage>
        <taxon>Eukaryota</taxon>
        <taxon>Metazoa</taxon>
        <taxon>Chordata</taxon>
        <taxon>Craniata</taxon>
        <taxon>Vertebrata</taxon>
        <taxon>Euteleostomi</taxon>
        <taxon>Mammalia</taxon>
        <taxon>Eutheria</taxon>
        <taxon>Euarchontoglires</taxon>
        <taxon>Primates</taxon>
        <taxon>Haplorrhini</taxon>
        <taxon>Catarrhini</taxon>
        <taxon>Hominidae</taxon>
        <taxon>Homo</taxon>
    </lineage>
</organism>
<feature type="signal peptide" evidence="6 7">
    <location>
        <begin position="1"/>
        <end position="20"/>
    </location>
</feature>
<feature type="chain" id="PRO_0000002031" description="Apolipoprotein C-III" evidence="6">
    <location>
        <begin position="21"/>
        <end position="99"/>
    </location>
</feature>
<feature type="region of interest" description="Lipid-binding">
    <location>
        <begin position="68"/>
        <end position="99"/>
    </location>
</feature>
<feature type="site" description="May interact with the LDL receptor" evidence="12">
    <location>
        <position position="37"/>
    </location>
</feature>
<feature type="site" description="May interact with the LDL receptor" evidence="12">
    <location>
        <position position="41"/>
    </location>
</feature>
<feature type="site" description="May interact with the LDL receptor" evidence="12">
    <location>
        <position position="44"/>
    </location>
</feature>
<feature type="glycosylation site" id="CAR_000168" description="O-linked (GalNAc...) threonine" evidence="2 4 5">
    <location>
        <position position="94"/>
    </location>
</feature>
<feature type="sequence variant" id="VAR_000643" description="In HALP2; dbSNP:rs121918382." evidence="3">
    <original>K</original>
    <variation>E</variation>
    <location>
        <position position="78"/>
    </location>
</feature>
<feature type="sequence variant" id="VAR_000644" description="In C-III-0; unglycosylated; dbSNP:rs121918381." evidence="5">
    <original>T</original>
    <variation>A</variation>
    <location>
        <position position="94"/>
    </location>
</feature>
<feature type="sequence conflict" description="In Ref. 8; AA sequence." evidence="11" ref="8">
    <original>ES</original>
    <variation>SQ</variation>
    <location>
        <begin position="52"/>
        <end position="53"/>
    </location>
</feature>
<feature type="sequence conflict" description="In Ref. 8; AA sequence." evidence="11" ref="8">
    <original>QQA</original>
    <variation>AQQ</variation>
    <location>
        <begin position="57"/>
        <end position="59"/>
    </location>
</feature>
<feature type="helix" evidence="13">
    <location>
        <begin position="29"/>
        <end position="39"/>
    </location>
</feature>
<feature type="helix" evidence="13">
    <location>
        <begin position="40"/>
        <end position="42"/>
    </location>
</feature>
<feature type="helix" evidence="13">
    <location>
        <begin position="43"/>
        <end position="48"/>
    </location>
</feature>
<feature type="helix" evidence="13">
    <location>
        <begin position="49"/>
        <end position="55"/>
    </location>
</feature>
<feature type="helix" evidence="13">
    <location>
        <begin position="56"/>
        <end position="62"/>
    </location>
</feature>
<feature type="turn" evidence="13">
    <location>
        <begin position="63"/>
        <end position="68"/>
    </location>
</feature>
<feature type="helix" evidence="13">
    <location>
        <begin position="69"/>
        <end position="80"/>
    </location>
</feature>
<feature type="helix" evidence="13">
    <location>
        <begin position="83"/>
        <end position="85"/>
    </location>
</feature>
<feature type="helix" evidence="13">
    <location>
        <begin position="93"/>
        <end position="98"/>
    </location>
</feature>
<keyword id="KW-0002">3D-structure</keyword>
<keyword id="KW-0162">Chylomicron</keyword>
<keyword id="KW-0903">Direct protein sequencing</keyword>
<keyword id="KW-0225">Disease variant</keyword>
<keyword id="KW-0325">Glycoprotein</keyword>
<keyword id="KW-0442">Lipid degradation</keyword>
<keyword id="KW-0443">Lipid metabolism</keyword>
<keyword id="KW-0445">Lipid transport</keyword>
<keyword id="KW-1267">Proteomics identification</keyword>
<keyword id="KW-1185">Reference proteome</keyword>
<keyword id="KW-0964">Secreted</keyword>
<keyword id="KW-0730">Sialic acid</keyword>
<keyword id="KW-0732">Signal</keyword>
<keyword id="KW-0813">Transport</keyword>
<keyword id="KW-0850">VLDL</keyword>
<proteinExistence type="evidence at protein level"/>
<gene>
    <name type="primary">APOC3</name>
</gene>
<accession>P02656</accession>
<accession>Q08E83</accession>
<accession>Q6Q786</accession>
<comment type="function">
    <text evidence="1 9 10">Component of triglyceride-rich very low density lipoproteins (VLDL) and high density lipoproteins (HDL) in plasma (PubMed:18201179, PubMed:22510806). Plays a multifaceted role in triglyceride homeostasis (PubMed:18201179, PubMed:22510806). Intracellularly, promotes hepatic very low density lipoprotein 1 (VLDL1) assembly and secretion; extracellularly, attenuates hydrolysis and clearance of triglyceride-rich lipoproteins (TRLs) (PubMed:18201179, PubMed:22510806). Impairs the lipolysis of TRLs by inhibiting lipoprotein lipase and the hepatic uptake of TRLs by remnant receptors (PubMed:18201179, PubMed:22510806). Formed of several curved helices connected via semiflexible hinges, so that it can wrap tightly around the curved micelle surface and easily adapt to the different diameters of its natural binding partners (PubMed:18408013).</text>
</comment>
<comment type="interaction">
    <interactant intactId="EBI-1220113">
        <id>P02656</id>
    </interactant>
    <interactant intactId="EBI-781551">
        <id>Q9Y282</id>
        <label>ERGIC3</label>
    </interactant>
    <organismsDiffer>false</organismsDiffer>
    <experiments>3</experiments>
</comment>
<comment type="interaction">
    <interactant intactId="EBI-1220113">
        <id>P02656</id>
    </interactant>
    <interactant intactId="EBI-18304435">
        <id>Q5JX71</id>
        <label>FAM209A</label>
    </interactant>
    <organismsDiffer>false</organismsDiffer>
    <experiments>3</experiments>
</comment>
<comment type="interaction">
    <interactant intactId="EBI-1220113">
        <id>P02656</id>
    </interactant>
    <interactant intactId="EBI-11721746">
        <id>Q8TED1</id>
        <label>GPX8</label>
    </interactant>
    <organismsDiffer>false</organismsDiffer>
    <experiments>3</experiments>
</comment>
<comment type="subcellular location">
    <subcellularLocation>
        <location evidence="9 10">Secreted</location>
    </subcellularLocation>
</comment>
<comment type="tissue specificity">
    <text evidence="8">Liver.</text>
</comment>
<comment type="PTM">
    <text evidence="2 4 5">The most abundant glycoforms are characterized by an O-linked disaccharide galactose linked to N-acetylgalactosamine (Gal-GalNAc), further modified with up to 3 sialic acid residues. Less abundant glycoforms are characterized by more complex and fucosylated glycan moieties. O-glycosylated on Thr-94 with a core 1 or possibly core 8 glycan.</text>
</comment>
<comment type="disease" evidence="3">
    <disease id="DI-03115">
        <name>Hyperalphalipoproteinemia 2</name>
        <acronym>HALP2</acronym>
        <description>A condition characterized by high levels of high density lipoprotein (HDL) and increased HDL cholesterol levels.</description>
        <dbReference type="MIM" id="614028"/>
    </disease>
    <text>The disease is caused by variants affecting the gene represented in this entry.</text>
</comment>
<comment type="similarity">
    <text evidence="11">Belongs to the apolipoprotein C3 family.</text>
</comment>
<name>APOC3_HUMAN</name>